<dbReference type="EC" id="3.5.1.102" evidence="2"/>
<dbReference type="EMBL" id="CP000678">
    <property type="protein sequence ID" value="ABQ86389.1"/>
    <property type="molecule type" value="Genomic_DNA"/>
</dbReference>
<dbReference type="RefSeq" id="WP_004034909.1">
    <property type="nucleotide sequence ID" value="NZ_CP117965.1"/>
</dbReference>
<dbReference type="SMR" id="A5UJL1"/>
<dbReference type="STRING" id="420247.Msm_0184"/>
<dbReference type="EnsemblBacteria" id="ABQ86389">
    <property type="protein sequence ID" value="ABQ86389"/>
    <property type="gene ID" value="Msm_0184"/>
</dbReference>
<dbReference type="GeneID" id="78816808"/>
<dbReference type="KEGG" id="msi:Msm_0184"/>
<dbReference type="PATRIC" id="fig|420247.28.peg.188"/>
<dbReference type="eggNOG" id="arCOG04536">
    <property type="taxonomic scope" value="Archaea"/>
</dbReference>
<dbReference type="HOGENOM" id="CLU_1192640_0_0_2"/>
<dbReference type="UniPathway" id="UPA00071"/>
<dbReference type="UniPathway" id="UPA00275"/>
<dbReference type="Proteomes" id="UP000001992">
    <property type="component" value="Chromosome"/>
</dbReference>
<dbReference type="GO" id="GO:0043729">
    <property type="term" value="F:2-amino-5-formylamino-6-(5-phosphoribosylamino)pyrimidin-4(3H)-one formate-lyase activity"/>
    <property type="evidence" value="ECO:0007669"/>
    <property type="project" value="UniProtKB-EC"/>
</dbReference>
<dbReference type="GO" id="GO:0008198">
    <property type="term" value="F:ferrous iron binding"/>
    <property type="evidence" value="ECO:0007669"/>
    <property type="project" value="UniProtKB-UniRule"/>
</dbReference>
<dbReference type="GO" id="GO:0052645">
    <property type="term" value="P:F420-0 metabolic process"/>
    <property type="evidence" value="ECO:0007669"/>
    <property type="project" value="UniProtKB-UniRule"/>
</dbReference>
<dbReference type="GO" id="GO:0009231">
    <property type="term" value="P:riboflavin biosynthetic process"/>
    <property type="evidence" value="ECO:0007669"/>
    <property type="project" value="UniProtKB-UniRule"/>
</dbReference>
<dbReference type="Gene3D" id="3.40.50.10310">
    <property type="entry name" value="Creatininase"/>
    <property type="match status" value="1"/>
</dbReference>
<dbReference type="HAMAP" id="MF_02116">
    <property type="entry name" value="FAPy_deform"/>
    <property type="match status" value="1"/>
</dbReference>
<dbReference type="InterPro" id="IPR024087">
    <property type="entry name" value="Creatininase-like_sf"/>
</dbReference>
<dbReference type="InterPro" id="IPR003785">
    <property type="entry name" value="Creatininase/forma_Hydrolase"/>
</dbReference>
<dbReference type="InterPro" id="IPR024901">
    <property type="entry name" value="FAPy_deformylase"/>
</dbReference>
<dbReference type="NCBIfam" id="NF033501">
    <property type="entry name" value="ArfB_arch_rifla"/>
    <property type="match status" value="1"/>
</dbReference>
<dbReference type="PANTHER" id="PTHR35005:SF1">
    <property type="entry name" value="2-AMINO-5-FORMYLAMINO-6-RIBOSYLAMINOPYRIMIDIN-4(3H)-ONE 5'-MONOPHOSPHATE DEFORMYLASE"/>
    <property type="match status" value="1"/>
</dbReference>
<dbReference type="PANTHER" id="PTHR35005">
    <property type="entry name" value="3-DEHYDRO-SCYLLO-INOSOSE HYDROLASE"/>
    <property type="match status" value="1"/>
</dbReference>
<dbReference type="Pfam" id="PF02633">
    <property type="entry name" value="Creatininase"/>
    <property type="match status" value="1"/>
</dbReference>
<dbReference type="SUPFAM" id="SSF102215">
    <property type="entry name" value="Creatininase"/>
    <property type="match status" value="1"/>
</dbReference>
<proteinExistence type="inferred from homology"/>
<keyword id="KW-0378">Hydrolase</keyword>
<keyword id="KW-0408">Iron</keyword>
<keyword id="KW-0479">Metal-binding</keyword>
<keyword id="KW-0862">Zinc</keyword>
<feature type="chain" id="PRO_0000406919" description="2-amino-5-formylamino-6-ribosylaminopyrimidin-4(3H)-one 5'-monophosphate deformylase">
    <location>
        <begin position="1"/>
        <end position="230"/>
    </location>
</feature>
<feature type="binding site" evidence="2">
    <location>
        <position position="29"/>
    </location>
    <ligand>
        <name>Fe cation</name>
        <dbReference type="ChEBI" id="CHEBI:24875"/>
        <label>1</label>
    </ligand>
</feature>
<feature type="binding site" evidence="2">
    <location>
        <position position="31"/>
    </location>
    <ligand>
        <name>Fe cation</name>
        <dbReference type="ChEBI" id="CHEBI:24875"/>
        <label>2</label>
    </ligand>
</feature>
<feature type="binding site" evidence="2">
    <location>
        <position position="40"/>
    </location>
    <ligand>
        <name>Fe cation</name>
        <dbReference type="ChEBI" id="CHEBI:24875"/>
        <label>1</label>
    </ligand>
</feature>
<feature type="binding site" evidence="2">
    <location>
        <position position="40"/>
    </location>
    <ligand>
        <name>Fe cation</name>
        <dbReference type="ChEBI" id="CHEBI:24875"/>
        <label>2</label>
    </ligand>
</feature>
<feature type="binding site" evidence="2">
    <location>
        <position position="109"/>
    </location>
    <ligand>
        <name>Fe cation</name>
        <dbReference type="ChEBI" id="CHEBI:24875"/>
        <label>1</label>
    </ligand>
</feature>
<sequence length="230" mass="25304">MAELRYRAGKIKNPRVHKIGVIALGSHLENHGPALPIDTDAKIGAHIAFQASLESGAKFLGIVFPAYELDEIDHGVHVSLDELKANVISTLNSAKKYLDIEKVVIVNSHGGNIPLMTELYDIEDKTDLTIIFNNKIISTEGPHGGSGELSMAKVLGIINEAEIENQTDLSKYEEVGLYGFKQARENDPNIEEGARDVEENGVYVDEVYGKQLFDLAINSVVFDIEKLLDF</sequence>
<evidence type="ECO:0000250" key="1"/>
<evidence type="ECO:0000255" key="2">
    <source>
        <dbReference type="HAMAP-Rule" id="MF_02116"/>
    </source>
</evidence>
<reference key="1">
    <citation type="journal article" date="2007" name="Proc. Natl. Acad. Sci. U.S.A.">
        <title>Genomic and metabolic adaptations of Methanobrevibacter smithii to the human gut.</title>
        <authorList>
            <person name="Samuel B.S."/>
            <person name="Hansen E.E."/>
            <person name="Manchester J.K."/>
            <person name="Coutinho P.M."/>
            <person name="Henrissat B."/>
            <person name="Fulton R."/>
            <person name="Latreille P."/>
            <person name="Kim K."/>
            <person name="Wilson R.K."/>
            <person name="Gordon J.I."/>
        </authorList>
    </citation>
    <scope>NUCLEOTIDE SEQUENCE [LARGE SCALE GENOMIC DNA]</scope>
    <source>
        <strain>ATCC 35061 / DSM 861 / OCM 144 / PS</strain>
    </source>
</reference>
<accession>A5UJL1</accession>
<protein>
    <recommendedName>
        <fullName evidence="2">2-amino-5-formylamino-6-ribosylaminopyrimidin-4(3H)-one 5'-monophosphate deformylase</fullName>
        <shortName evidence="2">FAPy deformylase</shortName>
        <ecNumber evidence="2">3.5.1.102</ecNumber>
    </recommendedName>
    <alternativeName>
        <fullName evidence="2">Formamide hydrolase</fullName>
    </alternativeName>
</protein>
<name>ARFB_METS3</name>
<organism>
    <name type="scientific">Methanobrevibacter smithii (strain ATCC 35061 / DSM 861 / OCM 144 / PS)</name>
    <dbReference type="NCBI Taxonomy" id="420247"/>
    <lineage>
        <taxon>Archaea</taxon>
        <taxon>Methanobacteriati</taxon>
        <taxon>Methanobacteriota</taxon>
        <taxon>Methanomada group</taxon>
        <taxon>Methanobacteria</taxon>
        <taxon>Methanobacteriales</taxon>
        <taxon>Methanobacteriaceae</taxon>
        <taxon>Methanobrevibacter</taxon>
    </lineage>
</organism>
<comment type="function">
    <text evidence="2">Catalyzes the hydrolysis of the formamide of 2-amino-5-formylamino-6-ribosylamino-4(3H)-pyrimidinone 5'-monophosphate (FAPy) to form 2,5-diamino-6-ribosylamino-4(3H)-pyrimidinone 5'-phosphate (APy).</text>
</comment>
<comment type="catalytic activity">
    <reaction evidence="2">
        <text>2-amino-5-formylamino-6-(5-phospho-D-ribosylamino)pyrimidin-4(3H)-one + H2O = 2,5-diamino-6-(1-D-ribosylamino)pyrimidin-4(3H)-one 5'-phosphate + formate + H(+)</text>
        <dbReference type="Rhea" id="RHEA:27282"/>
        <dbReference type="ChEBI" id="CHEBI:15377"/>
        <dbReference type="ChEBI" id="CHEBI:15378"/>
        <dbReference type="ChEBI" id="CHEBI:15740"/>
        <dbReference type="ChEBI" id="CHEBI:57258"/>
        <dbReference type="ChEBI" id="CHEBI:59545"/>
        <dbReference type="EC" id="3.5.1.102"/>
    </reaction>
</comment>
<comment type="cofactor">
    <cofactor evidence="1">
        <name>Fe(2+)</name>
        <dbReference type="ChEBI" id="CHEBI:29033"/>
    </cofactor>
    <text evidence="1">Requires one Fe(2+) ion for activity.</text>
</comment>
<comment type="cofactor">
    <cofactor evidence="1">
        <name>Fe(2+)</name>
        <dbReference type="ChEBI" id="CHEBI:29033"/>
    </cofactor>
    <cofactor evidence="1">
        <name>Zn(2+)</name>
        <dbReference type="ChEBI" id="CHEBI:29105"/>
    </cofactor>
    <text evidence="1">Requires an additional second metal ion that could be Fe(2+) or Zn(2+).</text>
</comment>
<comment type="pathway">
    <text evidence="2">Cofactor biosynthesis; coenzyme F420 biosynthesis.</text>
</comment>
<comment type="pathway">
    <text evidence="2">Cofactor biosynthesis; riboflavin biosynthesis.</text>
</comment>
<comment type="subunit">
    <text evidence="2">Homodimer.</text>
</comment>
<comment type="similarity">
    <text evidence="2">Belongs to the creatininase superfamily. FAPy deformylase family.</text>
</comment>
<gene>
    <name evidence="2" type="primary">arfB</name>
    <name type="ordered locus">Msm_0184</name>
</gene>